<organism>
    <name type="scientific">Salmonella newport (strain SL254)</name>
    <dbReference type="NCBI Taxonomy" id="423368"/>
    <lineage>
        <taxon>Bacteria</taxon>
        <taxon>Pseudomonadati</taxon>
        <taxon>Pseudomonadota</taxon>
        <taxon>Gammaproteobacteria</taxon>
        <taxon>Enterobacterales</taxon>
        <taxon>Enterobacteriaceae</taxon>
        <taxon>Salmonella</taxon>
    </lineage>
</organism>
<comment type="function">
    <text evidence="1">Binds 23S rRNA and is also seen to make contacts with the A and possibly P site tRNAs.</text>
</comment>
<comment type="subunit">
    <text evidence="1">Part of the 50S ribosomal subunit.</text>
</comment>
<comment type="similarity">
    <text evidence="1">Belongs to the universal ribosomal protein uL16 family.</text>
</comment>
<gene>
    <name evidence="1" type="primary">rplP</name>
    <name type="ordered locus">SNSL254_A3702</name>
</gene>
<proteinExistence type="inferred from homology"/>
<feature type="chain" id="PRO_1000143025" description="Large ribosomal subunit protein uL16">
    <location>
        <begin position="1"/>
        <end position="136"/>
    </location>
</feature>
<dbReference type="EMBL" id="CP001113">
    <property type="protein sequence ID" value="ACF64446.1"/>
    <property type="molecule type" value="Genomic_DNA"/>
</dbReference>
<dbReference type="RefSeq" id="WP_000941208.1">
    <property type="nucleotide sequence ID" value="NZ_CCMR01000003.1"/>
</dbReference>
<dbReference type="SMR" id="B4SUT3"/>
<dbReference type="GeneID" id="93035738"/>
<dbReference type="KEGG" id="see:SNSL254_A3702"/>
<dbReference type="HOGENOM" id="CLU_078858_2_1_6"/>
<dbReference type="Proteomes" id="UP000008824">
    <property type="component" value="Chromosome"/>
</dbReference>
<dbReference type="GO" id="GO:0022625">
    <property type="term" value="C:cytosolic large ribosomal subunit"/>
    <property type="evidence" value="ECO:0007669"/>
    <property type="project" value="TreeGrafter"/>
</dbReference>
<dbReference type="GO" id="GO:0019843">
    <property type="term" value="F:rRNA binding"/>
    <property type="evidence" value="ECO:0007669"/>
    <property type="project" value="UniProtKB-UniRule"/>
</dbReference>
<dbReference type="GO" id="GO:0003735">
    <property type="term" value="F:structural constituent of ribosome"/>
    <property type="evidence" value="ECO:0007669"/>
    <property type="project" value="InterPro"/>
</dbReference>
<dbReference type="GO" id="GO:0000049">
    <property type="term" value="F:tRNA binding"/>
    <property type="evidence" value="ECO:0007669"/>
    <property type="project" value="UniProtKB-KW"/>
</dbReference>
<dbReference type="GO" id="GO:0006412">
    <property type="term" value="P:translation"/>
    <property type="evidence" value="ECO:0007669"/>
    <property type="project" value="UniProtKB-UniRule"/>
</dbReference>
<dbReference type="CDD" id="cd01433">
    <property type="entry name" value="Ribosomal_L16_L10e"/>
    <property type="match status" value="1"/>
</dbReference>
<dbReference type="FunFam" id="3.90.1170.10:FF:000001">
    <property type="entry name" value="50S ribosomal protein L16"/>
    <property type="match status" value="1"/>
</dbReference>
<dbReference type="Gene3D" id="3.90.1170.10">
    <property type="entry name" value="Ribosomal protein L10e/L16"/>
    <property type="match status" value="1"/>
</dbReference>
<dbReference type="HAMAP" id="MF_01342">
    <property type="entry name" value="Ribosomal_uL16"/>
    <property type="match status" value="1"/>
</dbReference>
<dbReference type="InterPro" id="IPR047873">
    <property type="entry name" value="Ribosomal_uL16"/>
</dbReference>
<dbReference type="InterPro" id="IPR000114">
    <property type="entry name" value="Ribosomal_uL16_bact-type"/>
</dbReference>
<dbReference type="InterPro" id="IPR020798">
    <property type="entry name" value="Ribosomal_uL16_CS"/>
</dbReference>
<dbReference type="InterPro" id="IPR016180">
    <property type="entry name" value="Ribosomal_uL16_dom"/>
</dbReference>
<dbReference type="InterPro" id="IPR036920">
    <property type="entry name" value="Ribosomal_uL16_sf"/>
</dbReference>
<dbReference type="NCBIfam" id="TIGR01164">
    <property type="entry name" value="rplP_bact"/>
    <property type="match status" value="1"/>
</dbReference>
<dbReference type="PANTHER" id="PTHR12220">
    <property type="entry name" value="50S/60S RIBOSOMAL PROTEIN L16"/>
    <property type="match status" value="1"/>
</dbReference>
<dbReference type="PANTHER" id="PTHR12220:SF13">
    <property type="entry name" value="LARGE RIBOSOMAL SUBUNIT PROTEIN UL16M"/>
    <property type="match status" value="1"/>
</dbReference>
<dbReference type="Pfam" id="PF00252">
    <property type="entry name" value="Ribosomal_L16"/>
    <property type="match status" value="1"/>
</dbReference>
<dbReference type="PRINTS" id="PR00060">
    <property type="entry name" value="RIBOSOMALL16"/>
</dbReference>
<dbReference type="SUPFAM" id="SSF54686">
    <property type="entry name" value="Ribosomal protein L16p/L10e"/>
    <property type="match status" value="1"/>
</dbReference>
<dbReference type="PROSITE" id="PS00586">
    <property type="entry name" value="RIBOSOMAL_L16_1"/>
    <property type="match status" value="1"/>
</dbReference>
<dbReference type="PROSITE" id="PS00701">
    <property type="entry name" value="RIBOSOMAL_L16_2"/>
    <property type="match status" value="1"/>
</dbReference>
<evidence type="ECO:0000255" key="1">
    <source>
        <dbReference type="HAMAP-Rule" id="MF_01342"/>
    </source>
</evidence>
<evidence type="ECO:0000305" key="2"/>
<accession>B4SUT3</accession>
<sequence>MLQPKRTKFRKMHKGRNRGLAAGADVSFGSFGLKAVGRGRLTARQIEAARRAMTRAVKRQGKIWIRVFPDKPITEKPLAVRMGKGKGNVEYWVALIQPGKVLYEMDGVPEELAREAFKLAAAKLPIKTTFVTKTVM</sequence>
<keyword id="KW-0687">Ribonucleoprotein</keyword>
<keyword id="KW-0689">Ribosomal protein</keyword>
<keyword id="KW-0694">RNA-binding</keyword>
<keyword id="KW-0699">rRNA-binding</keyword>
<keyword id="KW-0820">tRNA-binding</keyword>
<name>RL16_SALNS</name>
<protein>
    <recommendedName>
        <fullName evidence="1">Large ribosomal subunit protein uL16</fullName>
    </recommendedName>
    <alternativeName>
        <fullName evidence="2">50S ribosomal protein L16</fullName>
    </alternativeName>
</protein>
<reference key="1">
    <citation type="journal article" date="2011" name="J. Bacteriol.">
        <title>Comparative genomics of 28 Salmonella enterica isolates: evidence for CRISPR-mediated adaptive sublineage evolution.</title>
        <authorList>
            <person name="Fricke W.F."/>
            <person name="Mammel M.K."/>
            <person name="McDermott P.F."/>
            <person name="Tartera C."/>
            <person name="White D.G."/>
            <person name="Leclerc J.E."/>
            <person name="Ravel J."/>
            <person name="Cebula T.A."/>
        </authorList>
    </citation>
    <scope>NUCLEOTIDE SEQUENCE [LARGE SCALE GENOMIC DNA]</scope>
    <source>
        <strain>SL254</strain>
    </source>
</reference>